<gene>
    <name evidence="1" type="primary">glnD</name>
    <name type="ordered locus">PSEEN4222</name>
</gene>
<reference key="1">
    <citation type="journal article" date="2006" name="Nat. Biotechnol.">
        <title>Complete genome sequence of the entomopathogenic and metabolically versatile soil bacterium Pseudomonas entomophila.</title>
        <authorList>
            <person name="Vodovar N."/>
            <person name="Vallenet D."/>
            <person name="Cruveiller S."/>
            <person name="Rouy Z."/>
            <person name="Barbe V."/>
            <person name="Acosta C."/>
            <person name="Cattolico L."/>
            <person name="Jubin C."/>
            <person name="Lajus A."/>
            <person name="Segurens B."/>
            <person name="Vacherie B."/>
            <person name="Wincker P."/>
            <person name="Weissenbach J."/>
            <person name="Lemaitre B."/>
            <person name="Medigue C."/>
            <person name="Boccard F."/>
        </authorList>
    </citation>
    <scope>NUCLEOTIDE SEQUENCE [LARGE SCALE GENOMIC DNA]</scope>
    <source>
        <strain>L48</strain>
    </source>
</reference>
<protein>
    <recommendedName>
        <fullName evidence="1">Bifunctional uridylyltransferase/uridylyl-removing enzyme</fullName>
        <shortName evidence="1">UTase/UR</shortName>
    </recommendedName>
    <alternativeName>
        <fullName evidence="1">Bifunctional [protein-PII] modification enzyme</fullName>
    </alternativeName>
    <alternativeName>
        <fullName evidence="1">Bifunctional nitrogen sensor protein</fullName>
    </alternativeName>
    <domain>
        <recommendedName>
            <fullName evidence="1">[Protein-PII] uridylyltransferase</fullName>
            <shortName evidence="1">PII uridylyltransferase</shortName>
            <shortName evidence="1">UTase</shortName>
            <ecNumber evidence="1">2.7.7.59</ecNumber>
        </recommendedName>
    </domain>
    <domain>
        <recommendedName>
            <fullName evidence="1">[Protein-PII]-UMP uridylyl-removing enzyme</fullName>
            <shortName evidence="1">UR</shortName>
            <ecNumber evidence="1">3.1.4.-</ecNumber>
        </recommendedName>
    </domain>
</protein>
<comment type="function">
    <text evidence="1">Modifies, by uridylylation and deuridylylation, the PII regulatory proteins (GlnB and homologs), in response to the nitrogen status of the cell that GlnD senses through the glutamine level. Under low glutamine levels, catalyzes the conversion of the PII proteins and UTP to PII-UMP and PPi, while under higher glutamine levels, GlnD hydrolyzes PII-UMP to PII and UMP (deuridylylation). Thus, controls uridylylation state and activity of the PII proteins, and plays an important role in the regulation of nitrogen assimilation and metabolism.</text>
</comment>
<comment type="catalytic activity">
    <reaction evidence="1">
        <text>[protein-PII]-L-tyrosine + UTP = [protein-PII]-uridylyl-L-tyrosine + diphosphate</text>
        <dbReference type="Rhea" id="RHEA:13673"/>
        <dbReference type="Rhea" id="RHEA-COMP:12147"/>
        <dbReference type="Rhea" id="RHEA-COMP:12148"/>
        <dbReference type="ChEBI" id="CHEBI:33019"/>
        <dbReference type="ChEBI" id="CHEBI:46398"/>
        <dbReference type="ChEBI" id="CHEBI:46858"/>
        <dbReference type="ChEBI" id="CHEBI:90602"/>
        <dbReference type="EC" id="2.7.7.59"/>
    </reaction>
</comment>
<comment type="catalytic activity">
    <reaction evidence="1">
        <text>[protein-PII]-uridylyl-L-tyrosine + H2O = [protein-PII]-L-tyrosine + UMP + H(+)</text>
        <dbReference type="Rhea" id="RHEA:48600"/>
        <dbReference type="Rhea" id="RHEA-COMP:12147"/>
        <dbReference type="Rhea" id="RHEA-COMP:12148"/>
        <dbReference type="ChEBI" id="CHEBI:15377"/>
        <dbReference type="ChEBI" id="CHEBI:15378"/>
        <dbReference type="ChEBI" id="CHEBI:46858"/>
        <dbReference type="ChEBI" id="CHEBI:57865"/>
        <dbReference type="ChEBI" id="CHEBI:90602"/>
    </reaction>
</comment>
<comment type="cofactor">
    <cofactor evidence="1">
        <name>Mg(2+)</name>
        <dbReference type="ChEBI" id="CHEBI:18420"/>
    </cofactor>
</comment>
<comment type="activity regulation">
    <text evidence="1">Uridylyltransferase (UTase) activity is inhibited by glutamine, while glutamine activates uridylyl-removing (UR) activity.</text>
</comment>
<comment type="domain">
    <text evidence="1">Has four distinct domains: an N-terminal nucleotidyltransferase (NT) domain responsible for UTase activity, a central HD domain that encodes UR activity, and two C-terminal ACT domains that seem to have a role in glutamine sensing.</text>
</comment>
<comment type="similarity">
    <text evidence="1">Belongs to the GlnD family.</text>
</comment>
<sequence>MPQVDPELFDRGQFQAELALKASPIAAFKKAIRMAGEVLDKRFREGREIRRLIEDRAWFVDNILQQAWNQFDWGNPDGIALVAVGGYGRGELHPYSDIDLLILLDAAEHEQYRDAIERFLTLLWDIGLEVGQSVRTVDECAEQARADLTVITNLMESRTIAGPEPLRQRMLDATSTAHMWPSKEFFLAKRAELKARHHKYNDTEYNLEPNVKGGPGGLRDIQTVLWVARRQYGTLNLHALAGEDFLLESENELLASSQAFLWRVRYALHMLAGRAEDRLLFDHQRSIATLLGFNDENPKRAIEQFMQQYYRVVMSISQLCDLIIQHFEEVILADDDSGTTQPLNARFRLHDGYIEAVHPNVFRRTPFAMLEIFVLMAQHPEIKGVRADTVRLLREHRHLIDDKFRNDIRNTSLFIELFKCEIGIHRNLRRMNRYGILGRYLPEFGLIVGQMQHDLFHIYTVDAHTLNLIKHLRKLQYTPVSEKFPLASKLMGRLPKPELIYLAGLYHDIGKGRQGDHSELGAVDAHAFCARHQLPAWDSRLIVWLVLNHLVMSTTAQRKDLSDPQVINDFALHVGDETRLDYLYVLTVADINATNPSLWNSWRASLLRQLYTETKRALRRGLENPLDREEQIRQTQSAALDILVREGTDPDDVEQLWSQLGDDYFLKHNAADVAWHSDAILQQPADSGPLVLIKETTQREFEGGTQIFIYAPDQHDFFAVTVAAMAQLNLNIHDARIITSSSQFTLDTYIVLDNDGGSIGDNPQRVKQIRDGLTEALRTPEDYPAIIQRRVPRQLKHFDFPPQVTILNDAQRPVTILEITAPDRPGLLARIGRIFLEFDISLQNAKIATLGERVEDVFFITDADNQPLSDPQLCSRLQEAIIQQLQAGQASEASPSRMTF</sequence>
<organism>
    <name type="scientific">Pseudomonas entomophila (strain L48)</name>
    <dbReference type="NCBI Taxonomy" id="384676"/>
    <lineage>
        <taxon>Bacteria</taxon>
        <taxon>Pseudomonadati</taxon>
        <taxon>Pseudomonadota</taxon>
        <taxon>Gammaproteobacteria</taxon>
        <taxon>Pseudomonadales</taxon>
        <taxon>Pseudomonadaceae</taxon>
        <taxon>Pseudomonas</taxon>
    </lineage>
</organism>
<accession>Q1I624</accession>
<dbReference type="EC" id="2.7.7.59" evidence="1"/>
<dbReference type="EC" id="3.1.4.-" evidence="1"/>
<dbReference type="EMBL" id="CT573326">
    <property type="protein sequence ID" value="CAK16911.1"/>
    <property type="molecule type" value="Genomic_DNA"/>
</dbReference>
<dbReference type="RefSeq" id="WP_011535282.1">
    <property type="nucleotide sequence ID" value="NC_008027.1"/>
</dbReference>
<dbReference type="SMR" id="Q1I624"/>
<dbReference type="STRING" id="384676.PSEEN4222"/>
<dbReference type="GeneID" id="32807229"/>
<dbReference type="KEGG" id="pen:PSEEN4222"/>
<dbReference type="eggNOG" id="COG2844">
    <property type="taxonomic scope" value="Bacteria"/>
</dbReference>
<dbReference type="HOGENOM" id="CLU_012833_0_0_6"/>
<dbReference type="OrthoDB" id="9758038at2"/>
<dbReference type="Proteomes" id="UP000000658">
    <property type="component" value="Chromosome"/>
</dbReference>
<dbReference type="GO" id="GO:0008773">
    <property type="term" value="F:[protein-PII] uridylyltransferase activity"/>
    <property type="evidence" value="ECO:0007669"/>
    <property type="project" value="UniProtKB-UniRule"/>
</dbReference>
<dbReference type="GO" id="GO:0008081">
    <property type="term" value="F:phosphoric diester hydrolase activity"/>
    <property type="evidence" value="ECO:0007669"/>
    <property type="project" value="UniProtKB-UniRule"/>
</dbReference>
<dbReference type="GO" id="GO:0006808">
    <property type="term" value="P:regulation of nitrogen utilization"/>
    <property type="evidence" value="ECO:0007669"/>
    <property type="project" value="UniProtKB-UniRule"/>
</dbReference>
<dbReference type="CDD" id="cd04899">
    <property type="entry name" value="ACT_ACR-UUR-like_2"/>
    <property type="match status" value="1"/>
</dbReference>
<dbReference type="CDD" id="cd04900">
    <property type="entry name" value="ACT_UUR-like_1"/>
    <property type="match status" value="1"/>
</dbReference>
<dbReference type="CDD" id="cd00077">
    <property type="entry name" value="HDc"/>
    <property type="match status" value="1"/>
</dbReference>
<dbReference type="CDD" id="cd05401">
    <property type="entry name" value="NT_GlnE_GlnD_like"/>
    <property type="match status" value="1"/>
</dbReference>
<dbReference type="FunFam" id="1.10.3090.10:FF:000005">
    <property type="entry name" value="Bifunctional uridylyltransferase/uridylyl-removing enzyme"/>
    <property type="match status" value="1"/>
</dbReference>
<dbReference type="Gene3D" id="3.30.460.10">
    <property type="entry name" value="Beta Polymerase, domain 2"/>
    <property type="match status" value="1"/>
</dbReference>
<dbReference type="Gene3D" id="1.10.3090.10">
    <property type="entry name" value="cca-adding enzyme, domain 2"/>
    <property type="match status" value="1"/>
</dbReference>
<dbReference type="Gene3D" id="1.20.120.330">
    <property type="entry name" value="Nucleotidyltransferases domain 2"/>
    <property type="match status" value="1"/>
</dbReference>
<dbReference type="HAMAP" id="MF_00277">
    <property type="entry name" value="PII_uridylyl_transf"/>
    <property type="match status" value="1"/>
</dbReference>
<dbReference type="InterPro" id="IPR045865">
    <property type="entry name" value="ACT-like_dom_sf"/>
</dbReference>
<dbReference type="InterPro" id="IPR002912">
    <property type="entry name" value="ACT_dom"/>
</dbReference>
<dbReference type="InterPro" id="IPR003607">
    <property type="entry name" value="HD/PDEase_dom"/>
</dbReference>
<dbReference type="InterPro" id="IPR006674">
    <property type="entry name" value="HD_domain"/>
</dbReference>
<dbReference type="InterPro" id="IPR043519">
    <property type="entry name" value="NT_sf"/>
</dbReference>
<dbReference type="InterPro" id="IPR013546">
    <property type="entry name" value="PII_UdlTrfase/GS_AdlTrfase"/>
</dbReference>
<dbReference type="InterPro" id="IPR002934">
    <property type="entry name" value="Polymerase_NTP_transf_dom"/>
</dbReference>
<dbReference type="InterPro" id="IPR010043">
    <property type="entry name" value="UTase/UR"/>
</dbReference>
<dbReference type="NCBIfam" id="NF001366">
    <property type="entry name" value="PRK00275.1"/>
    <property type="match status" value="1"/>
</dbReference>
<dbReference type="NCBIfam" id="TIGR01693">
    <property type="entry name" value="UTase_glnD"/>
    <property type="match status" value="1"/>
</dbReference>
<dbReference type="PANTHER" id="PTHR47320">
    <property type="entry name" value="BIFUNCTIONAL URIDYLYLTRANSFERASE/URIDYLYL-REMOVING ENZYME"/>
    <property type="match status" value="1"/>
</dbReference>
<dbReference type="PANTHER" id="PTHR47320:SF1">
    <property type="entry name" value="BIFUNCTIONAL URIDYLYLTRANSFERASE_URIDYLYL-REMOVING ENZYME"/>
    <property type="match status" value="1"/>
</dbReference>
<dbReference type="Pfam" id="PF01842">
    <property type="entry name" value="ACT"/>
    <property type="match status" value="1"/>
</dbReference>
<dbReference type="Pfam" id="PF08335">
    <property type="entry name" value="GlnD_UR_UTase"/>
    <property type="match status" value="1"/>
</dbReference>
<dbReference type="Pfam" id="PF01966">
    <property type="entry name" value="HD"/>
    <property type="match status" value="1"/>
</dbReference>
<dbReference type="Pfam" id="PF01909">
    <property type="entry name" value="NTP_transf_2"/>
    <property type="match status" value="1"/>
</dbReference>
<dbReference type="PIRSF" id="PIRSF006288">
    <property type="entry name" value="PII_uridyltransf"/>
    <property type="match status" value="1"/>
</dbReference>
<dbReference type="SMART" id="SM00471">
    <property type="entry name" value="HDc"/>
    <property type="match status" value="1"/>
</dbReference>
<dbReference type="SUPFAM" id="SSF55021">
    <property type="entry name" value="ACT-like"/>
    <property type="match status" value="2"/>
</dbReference>
<dbReference type="SUPFAM" id="SSF109604">
    <property type="entry name" value="HD-domain/PDEase-like"/>
    <property type="match status" value="1"/>
</dbReference>
<dbReference type="SUPFAM" id="SSF81301">
    <property type="entry name" value="Nucleotidyltransferase"/>
    <property type="match status" value="1"/>
</dbReference>
<dbReference type="SUPFAM" id="SSF81593">
    <property type="entry name" value="Nucleotidyltransferase substrate binding subunit/domain"/>
    <property type="match status" value="1"/>
</dbReference>
<dbReference type="PROSITE" id="PS51671">
    <property type="entry name" value="ACT"/>
    <property type="match status" value="2"/>
</dbReference>
<dbReference type="PROSITE" id="PS51831">
    <property type="entry name" value="HD"/>
    <property type="match status" value="1"/>
</dbReference>
<keyword id="KW-0378">Hydrolase</keyword>
<keyword id="KW-0460">Magnesium</keyword>
<keyword id="KW-0511">Multifunctional enzyme</keyword>
<keyword id="KW-0548">Nucleotidyltransferase</keyword>
<keyword id="KW-0677">Repeat</keyword>
<keyword id="KW-0808">Transferase</keyword>
<feature type="chain" id="PRO_1000022351" description="Bifunctional uridylyltransferase/uridylyl-removing enzyme">
    <location>
        <begin position="1"/>
        <end position="900"/>
    </location>
</feature>
<feature type="domain" description="HD" evidence="2">
    <location>
        <begin position="461"/>
        <end position="583"/>
    </location>
</feature>
<feature type="domain" description="ACT 1" evidence="1">
    <location>
        <begin position="706"/>
        <end position="784"/>
    </location>
</feature>
<feature type="domain" description="ACT 2" evidence="1">
    <location>
        <begin position="816"/>
        <end position="900"/>
    </location>
</feature>
<feature type="region of interest" description="Uridylyltransferase">
    <location>
        <begin position="1"/>
        <end position="342"/>
    </location>
</feature>
<feature type="region of interest" description="Uridylyl-removing">
    <location>
        <begin position="343"/>
        <end position="705"/>
    </location>
</feature>
<evidence type="ECO:0000255" key="1">
    <source>
        <dbReference type="HAMAP-Rule" id="MF_00277"/>
    </source>
</evidence>
<evidence type="ECO:0000255" key="2">
    <source>
        <dbReference type="PROSITE-ProRule" id="PRU01175"/>
    </source>
</evidence>
<proteinExistence type="inferred from homology"/>
<name>GLND_PSEE4</name>